<reference key="1">
    <citation type="journal article" date="2011" name="J. Bacteriol.">
        <title>Complete genome sequence of the plant growth-promoting endophyte Burkholderia phytofirmans strain PsJN.</title>
        <authorList>
            <person name="Weilharter A."/>
            <person name="Mitter B."/>
            <person name="Shin M.V."/>
            <person name="Chain P.S."/>
            <person name="Nowak J."/>
            <person name="Sessitsch A."/>
        </authorList>
    </citation>
    <scope>NUCLEOTIDE SEQUENCE [LARGE SCALE GENOMIC DNA]</scope>
    <source>
        <strain>DSM 17436 / LMG 22146 / PsJN</strain>
    </source>
</reference>
<feature type="chain" id="PRO_1000126793" description="Large ribosomal subunit protein bL31B">
    <location>
        <begin position="1"/>
        <end position="88"/>
    </location>
</feature>
<organism>
    <name type="scientific">Paraburkholderia phytofirmans (strain DSM 17436 / LMG 22146 / PsJN)</name>
    <name type="common">Burkholderia phytofirmans</name>
    <dbReference type="NCBI Taxonomy" id="398527"/>
    <lineage>
        <taxon>Bacteria</taxon>
        <taxon>Pseudomonadati</taxon>
        <taxon>Pseudomonadota</taxon>
        <taxon>Betaproteobacteria</taxon>
        <taxon>Burkholderiales</taxon>
        <taxon>Burkholderiaceae</taxon>
        <taxon>Paraburkholderia</taxon>
    </lineage>
</organism>
<comment type="subunit">
    <text evidence="1">Part of the 50S ribosomal subunit.</text>
</comment>
<comment type="similarity">
    <text evidence="1">Belongs to the bacterial ribosomal protein bL31 family. Type B subfamily.</text>
</comment>
<protein>
    <recommendedName>
        <fullName evidence="1">Large ribosomal subunit protein bL31B</fullName>
    </recommendedName>
    <alternativeName>
        <fullName evidence="2">50S ribosomal protein L31 type B</fullName>
    </alternativeName>
</protein>
<gene>
    <name evidence="1" type="primary">rpmE2</name>
    <name type="ordered locus">Bphyt_1820</name>
</gene>
<evidence type="ECO:0000255" key="1">
    <source>
        <dbReference type="HAMAP-Rule" id="MF_00502"/>
    </source>
</evidence>
<evidence type="ECO:0000305" key="2"/>
<keyword id="KW-0687">Ribonucleoprotein</keyword>
<keyword id="KW-0689">Ribosomal protein</keyword>
<accession>B2T3R7</accession>
<dbReference type="EMBL" id="CP001052">
    <property type="protein sequence ID" value="ACD16228.1"/>
    <property type="molecule type" value="Genomic_DNA"/>
</dbReference>
<dbReference type="RefSeq" id="WP_012432834.1">
    <property type="nucleotide sequence ID" value="NC_010681.1"/>
</dbReference>
<dbReference type="SMR" id="B2T3R7"/>
<dbReference type="STRING" id="398527.Bphyt_1820"/>
<dbReference type="KEGG" id="bpy:Bphyt_1820"/>
<dbReference type="eggNOG" id="COG0254">
    <property type="taxonomic scope" value="Bacteria"/>
</dbReference>
<dbReference type="HOGENOM" id="CLU_114306_2_1_4"/>
<dbReference type="OrthoDB" id="9803251at2"/>
<dbReference type="Proteomes" id="UP000001739">
    <property type="component" value="Chromosome 1"/>
</dbReference>
<dbReference type="GO" id="GO:1990904">
    <property type="term" value="C:ribonucleoprotein complex"/>
    <property type="evidence" value="ECO:0007669"/>
    <property type="project" value="UniProtKB-KW"/>
</dbReference>
<dbReference type="GO" id="GO:0005840">
    <property type="term" value="C:ribosome"/>
    <property type="evidence" value="ECO:0007669"/>
    <property type="project" value="UniProtKB-KW"/>
</dbReference>
<dbReference type="GO" id="GO:0003735">
    <property type="term" value="F:structural constituent of ribosome"/>
    <property type="evidence" value="ECO:0007669"/>
    <property type="project" value="InterPro"/>
</dbReference>
<dbReference type="GO" id="GO:0006412">
    <property type="term" value="P:translation"/>
    <property type="evidence" value="ECO:0007669"/>
    <property type="project" value="UniProtKB-UniRule"/>
</dbReference>
<dbReference type="Gene3D" id="4.10.830.30">
    <property type="entry name" value="Ribosomal protein L31"/>
    <property type="match status" value="1"/>
</dbReference>
<dbReference type="HAMAP" id="MF_00502">
    <property type="entry name" value="Ribosomal_bL31_2"/>
    <property type="match status" value="1"/>
</dbReference>
<dbReference type="InterPro" id="IPR034704">
    <property type="entry name" value="Ribosomal_bL28/bL31-like_sf"/>
</dbReference>
<dbReference type="InterPro" id="IPR002150">
    <property type="entry name" value="Ribosomal_bL31"/>
</dbReference>
<dbReference type="InterPro" id="IPR027493">
    <property type="entry name" value="Ribosomal_bL31_B"/>
</dbReference>
<dbReference type="InterPro" id="IPR042105">
    <property type="entry name" value="Ribosomal_bL31_sf"/>
</dbReference>
<dbReference type="NCBIfam" id="TIGR00105">
    <property type="entry name" value="L31"/>
    <property type="match status" value="1"/>
</dbReference>
<dbReference type="NCBIfam" id="NF002462">
    <property type="entry name" value="PRK01678.1"/>
    <property type="match status" value="1"/>
</dbReference>
<dbReference type="PANTHER" id="PTHR33280">
    <property type="entry name" value="50S RIBOSOMAL PROTEIN L31, CHLOROPLASTIC"/>
    <property type="match status" value="1"/>
</dbReference>
<dbReference type="PANTHER" id="PTHR33280:SF1">
    <property type="entry name" value="LARGE RIBOSOMAL SUBUNIT PROTEIN BL31C"/>
    <property type="match status" value="1"/>
</dbReference>
<dbReference type="Pfam" id="PF01197">
    <property type="entry name" value="Ribosomal_L31"/>
    <property type="match status" value="1"/>
</dbReference>
<dbReference type="PRINTS" id="PR01249">
    <property type="entry name" value="RIBOSOMALL31"/>
</dbReference>
<dbReference type="SUPFAM" id="SSF143800">
    <property type="entry name" value="L28p-like"/>
    <property type="match status" value="1"/>
</dbReference>
<dbReference type="PROSITE" id="PS01143">
    <property type="entry name" value="RIBOSOMAL_L31"/>
    <property type="match status" value="1"/>
</dbReference>
<proteinExistence type="inferred from homology"/>
<sequence>MKEGIHPDYREVLFIDVSNDFKFVTRSTIQTRETAEFEGKTYPLAKIEVSSESHPFYTGQQKIMDTAGRVEKFRNKFGSRATGKAVAK</sequence>
<name>RL31B_PARPJ</name>